<accession>Q1J5E0</accession>
<gene>
    <name evidence="1" type="primary">glyQ</name>
    <name type="ordered locus">MGAS10750_Spy1496</name>
</gene>
<keyword id="KW-0030">Aminoacyl-tRNA synthetase</keyword>
<keyword id="KW-0067">ATP-binding</keyword>
<keyword id="KW-0963">Cytoplasm</keyword>
<keyword id="KW-0436">Ligase</keyword>
<keyword id="KW-0547">Nucleotide-binding</keyword>
<keyword id="KW-0648">Protein biosynthesis</keyword>
<reference key="1">
    <citation type="journal article" date="2006" name="Proc. Natl. Acad. Sci. U.S.A.">
        <title>Molecular genetic anatomy of inter- and intraserotype variation in the human bacterial pathogen group A Streptococcus.</title>
        <authorList>
            <person name="Beres S.B."/>
            <person name="Richter E.W."/>
            <person name="Nagiec M.J."/>
            <person name="Sumby P."/>
            <person name="Porcella S.F."/>
            <person name="DeLeo F.R."/>
            <person name="Musser J.M."/>
        </authorList>
    </citation>
    <scope>NUCLEOTIDE SEQUENCE [LARGE SCALE GENOMIC DNA]</scope>
    <source>
        <strain>MGAS10750</strain>
    </source>
</reference>
<protein>
    <recommendedName>
        <fullName evidence="1">Glycine--tRNA ligase alpha subunit</fullName>
        <ecNumber evidence="1">6.1.1.14</ecNumber>
    </recommendedName>
    <alternativeName>
        <fullName evidence="1">Glycyl-tRNA synthetase alpha subunit</fullName>
        <shortName evidence="1">GlyRS</shortName>
    </alternativeName>
</protein>
<feature type="chain" id="PRO_1000047503" description="Glycine--tRNA ligase alpha subunit">
    <location>
        <begin position="1"/>
        <end position="305"/>
    </location>
</feature>
<comment type="catalytic activity">
    <reaction evidence="1">
        <text>tRNA(Gly) + glycine + ATP = glycyl-tRNA(Gly) + AMP + diphosphate</text>
        <dbReference type="Rhea" id="RHEA:16013"/>
        <dbReference type="Rhea" id="RHEA-COMP:9664"/>
        <dbReference type="Rhea" id="RHEA-COMP:9683"/>
        <dbReference type="ChEBI" id="CHEBI:30616"/>
        <dbReference type="ChEBI" id="CHEBI:33019"/>
        <dbReference type="ChEBI" id="CHEBI:57305"/>
        <dbReference type="ChEBI" id="CHEBI:78442"/>
        <dbReference type="ChEBI" id="CHEBI:78522"/>
        <dbReference type="ChEBI" id="CHEBI:456215"/>
        <dbReference type="EC" id="6.1.1.14"/>
    </reaction>
</comment>
<comment type="subunit">
    <text evidence="1">Tetramer of two alpha and two beta subunits.</text>
</comment>
<comment type="subcellular location">
    <subcellularLocation>
        <location evidence="1">Cytoplasm</location>
    </subcellularLocation>
</comment>
<comment type="similarity">
    <text evidence="1">Belongs to the class-II aminoacyl-tRNA synthetase family.</text>
</comment>
<proteinExistence type="inferred from homology"/>
<sequence length="305" mass="34851">MSKKLTFQEIILTLQQYWNDQGCMLMQAYDNEKGAGTMSPYTFLRAIGPEPWNAAYVEPSRRPADGRYGENPNRLYQHHQFQVVMKPSPSNIQELYLASLEKLGINPLEHDIRFVEDNWENPSTGSAGLGWEVWLDGMEITQFTYFQQVGGLATSPVTAEVTYGLERLASYIQEVDSVYDIEWAPGVKYGEIFLQPEYEHSKYSFEMSDQDMLLENFEKFEKEASRALEEGLVHPAYDYVLKCSHTFNLLDARGAVSVTERAGYIARIRNLARVVAKTFVAERKKLGFPLLDEATRAILLAEDDE</sequence>
<evidence type="ECO:0000255" key="1">
    <source>
        <dbReference type="HAMAP-Rule" id="MF_00254"/>
    </source>
</evidence>
<dbReference type="EC" id="6.1.1.14" evidence="1"/>
<dbReference type="EMBL" id="CP000262">
    <property type="protein sequence ID" value="ABF38446.1"/>
    <property type="molecule type" value="Genomic_DNA"/>
</dbReference>
<dbReference type="SMR" id="Q1J5E0"/>
<dbReference type="KEGG" id="spi:MGAS10750_Spy1496"/>
<dbReference type="HOGENOM" id="CLU_057066_1_0_9"/>
<dbReference type="Proteomes" id="UP000002434">
    <property type="component" value="Chromosome"/>
</dbReference>
<dbReference type="GO" id="GO:0005829">
    <property type="term" value="C:cytosol"/>
    <property type="evidence" value="ECO:0007669"/>
    <property type="project" value="TreeGrafter"/>
</dbReference>
<dbReference type="GO" id="GO:0005524">
    <property type="term" value="F:ATP binding"/>
    <property type="evidence" value="ECO:0007669"/>
    <property type="project" value="UniProtKB-UniRule"/>
</dbReference>
<dbReference type="GO" id="GO:0140096">
    <property type="term" value="F:catalytic activity, acting on a protein"/>
    <property type="evidence" value="ECO:0007669"/>
    <property type="project" value="UniProtKB-ARBA"/>
</dbReference>
<dbReference type="GO" id="GO:0004820">
    <property type="term" value="F:glycine-tRNA ligase activity"/>
    <property type="evidence" value="ECO:0007669"/>
    <property type="project" value="UniProtKB-UniRule"/>
</dbReference>
<dbReference type="GO" id="GO:0016740">
    <property type="term" value="F:transferase activity"/>
    <property type="evidence" value="ECO:0007669"/>
    <property type="project" value="UniProtKB-ARBA"/>
</dbReference>
<dbReference type="GO" id="GO:0006426">
    <property type="term" value="P:glycyl-tRNA aminoacylation"/>
    <property type="evidence" value="ECO:0007669"/>
    <property type="project" value="UniProtKB-UniRule"/>
</dbReference>
<dbReference type="CDD" id="cd00733">
    <property type="entry name" value="GlyRS_alpha_core"/>
    <property type="match status" value="1"/>
</dbReference>
<dbReference type="FunFam" id="3.30.930.10:FF:000006">
    <property type="entry name" value="Glycine--tRNA ligase alpha subunit"/>
    <property type="match status" value="1"/>
</dbReference>
<dbReference type="Gene3D" id="3.30.930.10">
    <property type="entry name" value="Bira Bifunctional Protein, Domain 2"/>
    <property type="match status" value="1"/>
</dbReference>
<dbReference type="Gene3D" id="1.20.58.180">
    <property type="entry name" value="Class II aaRS and biotin synthetases, domain 2"/>
    <property type="match status" value="1"/>
</dbReference>
<dbReference type="HAMAP" id="MF_00254">
    <property type="entry name" value="Gly_tRNA_synth_alpha"/>
    <property type="match status" value="1"/>
</dbReference>
<dbReference type="InterPro" id="IPR045864">
    <property type="entry name" value="aa-tRNA-synth_II/BPL/LPL"/>
</dbReference>
<dbReference type="InterPro" id="IPR006194">
    <property type="entry name" value="Gly-tRNA-synth_heterodimer"/>
</dbReference>
<dbReference type="InterPro" id="IPR002310">
    <property type="entry name" value="Gly-tRNA_ligase_asu"/>
</dbReference>
<dbReference type="NCBIfam" id="TIGR00388">
    <property type="entry name" value="glyQ"/>
    <property type="match status" value="1"/>
</dbReference>
<dbReference type="NCBIfam" id="NF006827">
    <property type="entry name" value="PRK09348.1"/>
    <property type="match status" value="1"/>
</dbReference>
<dbReference type="PANTHER" id="PTHR30075:SF2">
    <property type="entry name" value="GLYCINE--TRNA LIGASE, CHLOROPLASTIC_MITOCHONDRIAL 2"/>
    <property type="match status" value="1"/>
</dbReference>
<dbReference type="PANTHER" id="PTHR30075">
    <property type="entry name" value="GLYCYL-TRNA SYNTHETASE"/>
    <property type="match status" value="1"/>
</dbReference>
<dbReference type="Pfam" id="PF02091">
    <property type="entry name" value="tRNA-synt_2e"/>
    <property type="match status" value="1"/>
</dbReference>
<dbReference type="PRINTS" id="PR01044">
    <property type="entry name" value="TRNASYNTHGA"/>
</dbReference>
<dbReference type="SUPFAM" id="SSF55681">
    <property type="entry name" value="Class II aaRS and biotin synthetases"/>
    <property type="match status" value="1"/>
</dbReference>
<dbReference type="PROSITE" id="PS50861">
    <property type="entry name" value="AA_TRNA_LIGASE_II_GLYAB"/>
    <property type="match status" value="1"/>
</dbReference>
<organism>
    <name type="scientific">Streptococcus pyogenes serotype M4 (strain MGAS10750)</name>
    <dbReference type="NCBI Taxonomy" id="370554"/>
    <lineage>
        <taxon>Bacteria</taxon>
        <taxon>Bacillati</taxon>
        <taxon>Bacillota</taxon>
        <taxon>Bacilli</taxon>
        <taxon>Lactobacillales</taxon>
        <taxon>Streptococcaceae</taxon>
        <taxon>Streptococcus</taxon>
    </lineage>
</organism>
<name>SYGA_STRPF</name>